<reference key="1">
    <citation type="journal article" date="1999" name="J. Biol. Chem.">
        <title>Cloning of a unique lipase from endothelial cells extends the lipase gene family.</title>
        <authorList>
            <person name="Hirata K."/>
            <person name="Dichek H.L."/>
            <person name="Cioffi J.A."/>
            <person name="Choi S.Y."/>
            <person name="Leeper N.J."/>
            <person name="Quintana L."/>
            <person name="Kronmal G.S."/>
            <person name="Cooper A.D."/>
            <person name="Quertermous T."/>
        </authorList>
    </citation>
    <scope>NUCLEOTIDE SEQUENCE [MRNA]</scope>
    <scope>TISSUE SPECIFICITY</scope>
    <source>
        <tissue>Endothelial cell</tissue>
    </source>
</reference>
<reference key="2">
    <citation type="journal article" date="2009" name="PLoS Biol.">
        <title>Lineage-specific biology revealed by a finished genome assembly of the mouse.</title>
        <authorList>
            <person name="Church D.M."/>
            <person name="Goodstadt L."/>
            <person name="Hillier L.W."/>
            <person name="Zody M.C."/>
            <person name="Goldstein S."/>
            <person name="She X."/>
            <person name="Bult C.J."/>
            <person name="Agarwala R."/>
            <person name="Cherry J.L."/>
            <person name="DiCuccio M."/>
            <person name="Hlavina W."/>
            <person name="Kapustin Y."/>
            <person name="Meric P."/>
            <person name="Maglott D."/>
            <person name="Birtle Z."/>
            <person name="Marques A.C."/>
            <person name="Graves T."/>
            <person name="Zhou S."/>
            <person name="Teague B."/>
            <person name="Potamousis K."/>
            <person name="Churas C."/>
            <person name="Place M."/>
            <person name="Herschleb J."/>
            <person name="Runnheim R."/>
            <person name="Forrest D."/>
            <person name="Amos-Landgraf J."/>
            <person name="Schwartz D.C."/>
            <person name="Cheng Z."/>
            <person name="Lindblad-Toh K."/>
            <person name="Eichler E.E."/>
            <person name="Ponting C.P."/>
        </authorList>
    </citation>
    <scope>NUCLEOTIDE SEQUENCE [LARGE SCALE GENOMIC DNA]</scope>
    <source>
        <strain>C57BL/6J</strain>
    </source>
</reference>
<reference key="3">
    <citation type="journal article" date="2004" name="Genome Res.">
        <title>The status, quality, and expansion of the NIH full-length cDNA project: the Mammalian Gene Collection (MGC).</title>
        <authorList>
            <consortium name="The MGC Project Team"/>
        </authorList>
    </citation>
    <scope>NUCLEOTIDE SEQUENCE [LARGE SCALE MRNA]</scope>
    <source>
        <tissue>Mammary gland</tissue>
    </source>
</reference>
<protein>
    <recommendedName>
        <fullName>Endothelial lipase</fullName>
        <ecNumber evidence="2">3.1.1.3</ecNumber>
    </recommendedName>
    <alternativeName>
        <fullName>Endothelial cell-derived lipase</fullName>
        <shortName>EDL</shortName>
    </alternativeName>
    <alternativeName>
        <fullName>Phospholipase A1</fullName>
        <ecNumber evidence="2">3.1.1.32</ecNumber>
    </alternativeName>
</protein>
<keyword id="KW-1015">Disulfide bond</keyword>
<keyword id="KW-0325">Glycoprotein</keyword>
<keyword id="KW-0358">Heparin-binding</keyword>
<keyword id="KW-0378">Hydrolase</keyword>
<keyword id="KW-0442">Lipid degradation</keyword>
<keyword id="KW-0443">Lipid metabolism</keyword>
<keyword id="KW-1185">Reference proteome</keyword>
<keyword id="KW-0964">Secreted</keyword>
<keyword id="KW-0732">Signal</keyword>
<sequence>MRNTVFLLGFWSVYCYFPAGSITTLRPQGSLRDEHHKPTGVPATARPSVAFNIRTSKDPEQEGCNLSLGDSKLLENCGFNMTAKTFFIIHGWTMSGMFESWLHKLVSALQMREKDANVVVVDWLPLAHQLYTDAVNNTRVVGQRVAGMLDWLQEKEEFSLGNVHLIGYSLGAHVAGYAGNFVKGTVGRITGLDPAGPMFEGVDINRRLSPDDADFVDVLHTYTLSFGLSIGIRMPVGHIDIYPNGGDFQPGCGFNDVIGSFAYGTISEMVKCEHERAVHLFVDSLVNQDKPSFAFQCTDSSRFKRGICLSCRKNRCNNIGYNAKKMRKKRNSKMYLKTRAGMPFKVYHYQLKVHMFSYNNSGDTQPTLYITLYGSNADSQNLPLEIVEKIELNATNTFLVYTEEDLGDLLKMRLTWEGVAHSWYNLWNEFRNYLSQPSNPSRELYIRRIRVKSGETQRKVTFCTQDPTKSSISPGQELWFHKCQDGWKMKNKTSPFVNLA</sequence>
<proteinExistence type="evidence at transcript level"/>
<feature type="signal peptide" evidence="3">
    <location>
        <begin position="1"/>
        <end position="20"/>
    </location>
</feature>
<feature type="chain" id="PRO_0000017798" description="Endothelial lipase">
    <location>
        <begin position="21"/>
        <end position="500"/>
    </location>
</feature>
<feature type="domain" description="PLAT" evidence="4">
    <location>
        <begin position="347"/>
        <end position="482"/>
    </location>
</feature>
<feature type="active site" description="Nucleophile" evidence="1">
    <location>
        <position position="169"/>
    </location>
</feature>
<feature type="active site" description="Charge relay system" evidence="5">
    <location>
        <position position="193"/>
    </location>
</feature>
<feature type="active site" description="Charge relay system" evidence="5">
    <location>
        <position position="274"/>
    </location>
</feature>
<feature type="binding site" evidence="1">
    <location>
        <begin position="325"/>
        <end position="337"/>
    </location>
    <ligand>
        <name>heparin</name>
        <dbReference type="ChEBI" id="CHEBI:28304"/>
    </ligand>
</feature>
<feature type="glycosylation site" description="N-linked (GlcNAc...) asparagine" evidence="3">
    <location>
        <position position="65"/>
    </location>
</feature>
<feature type="glycosylation site" description="N-linked (GlcNAc...) asparagine" evidence="3">
    <location>
        <position position="80"/>
    </location>
</feature>
<feature type="glycosylation site" description="N-linked (GlcNAc...) asparagine" evidence="3">
    <location>
        <position position="136"/>
    </location>
</feature>
<feature type="glycosylation site" description="N-linked (GlcNAc...) asparagine" evidence="3">
    <location>
        <position position="359"/>
    </location>
</feature>
<feature type="glycosylation site" description="N-linked (GlcNAc...) asparagine" evidence="3">
    <location>
        <position position="393"/>
    </location>
</feature>
<feature type="glycosylation site" description="N-linked (GlcNAc...) asparagine" evidence="3">
    <location>
        <position position="491"/>
    </location>
</feature>
<feature type="disulfide bond" evidence="4">
    <location>
        <begin position="64"/>
        <end position="77"/>
    </location>
</feature>
<feature type="disulfide bond" evidence="4">
    <location>
        <begin position="252"/>
        <end position="272"/>
    </location>
</feature>
<feature type="disulfide bond" evidence="4">
    <location>
        <begin position="297"/>
        <end position="316"/>
    </location>
</feature>
<feature type="disulfide bond" evidence="4">
    <location>
        <begin position="308"/>
        <end position="311"/>
    </location>
</feature>
<feature type="disulfide bond" evidence="4">
    <location>
        <begin position="463"/>
        <end position="483"/>
    </location>
</feature>
<feature type="sequence conflict" description="In Ref. 3; AAH20991." evidence="7" ref="3">
    <original>Q</original>
    <variation>E</variation>
    <location>
        <position position="28"/>
    </location>
</feature>
<feature type="sequence conflict" description="In Ref. 1; AAD30435." evidence="7" ref="1">
    <original>Y</original>
    <variation>C</variation>
    <location>
        <position position="424"/>
    </location>
</feature>
<accession>Q9WVG5</accession>
<accession>Q8VDU2</accession>
<gene>
    <name type="primary">Lipg</name>
</gene>
<evidence type="ECO:0000250" key="1"/>
<evidence type="ECO:0000250" key="2">
    <source>
        <dbReference type="UniProtKB" id="Q9Y5X9"/>
    </source>
</evidence>
<evidence type="ECO:0000255" key="3"/>
<evidence type="ECO:0000255" key="4">
    <source>
        <dbReference type="PROSITE-ProRule" id="PRU00152"/>
    </source>
</evidence>
<evidence type="ECO:0000255" key="5">
    <source>
        <dbReference type="PROSITE-ProRule" id="PRU10037"/>
    </source>
</evidence>
<evidence type="ECO:0000269" key="6">
    <source>
    </source>
</evidence>
<evidence type="ECO:0000305" key="7"/>
<name>LIPG_MOUSE</name>
<comment type="function">
    <text evidence="2">Exerts both phospholipase and triglyceride lipase activities (By similarity). More active as a phospholipase than a triglyceride lipase (By similarity). Hydrolyzes triglycerides, both with short-chain fatty acyl groups (tributyrin) and long-chain fatty acyl groups (triolein) with similar levels of activity toward both types of substrates (By similarity). Hydrolyzes high density lipoproteins (HDL) more efficiently than other lipoproteins (By similarity).</text>
</comment>
<comment type="catalytic activity">
    <reaction evidence="2">
        <text>a triacylglycerol + H2O = a diacylglycerol + a fatty acid + H(+)</text>
        <dbReference type="Rhea" id="RHEA:12044"/>
        <dbReference type="ChEBI" id="CHEBI:15377"/>
        <dbReference type="ChEBI" id="CHEBI:15378"/>
        <dbReference type="ChEBI" id="CHEBI:17855"/>
        <dbReference type="ChEBI" id="CHEBI:18035"/>
        <dbReference type="ChEBI" id="CHEBI:28868"/>
        <dbReference type="EC" id="3.1.1.3"/>
    </reaction>
</comment>
<comment type="catalytic activity">
    <reaction evidence="2">
        <text>a 1,2-diacyl-sn-glycero-3-phosphocholine + H2O = a 2-acyl-sn-glycero-3-phosphocholine + a fatty acid + H(+)</text>
        <dbReference type="Rhea" id="RHEA:18689"/>
        <dbReference type="ChEBI" id="CHEBI:15377"/>
        <dbReference type="ChEBI" id="CHEBI:15378"/>
        <dbReference type="ChEBI" id="CHEBI:28868"/>
        <dbReference type="ChEBI" id="CHEBI:57643"/>
        <dbReference type="ChEBI" id="CHEBI:57875"/>
        <dbReference type="EC" id="3.1.1.32"/>
    </reaction>
</comment>
<comment type="catalytic activity">
    <reaction evidence="2">
        <text>1,2,3-tri-(9Z-octadecenoyl)-glycerol + H2O = di-(9Z)-octadecenoylglycerol + (9Z)-octadecenoate + H(+)</text>
        <dbReference type="Rhea" id="RHEA:38575"/>
        <dbReference type="ChEBI" id="CHEBI:15377"/>
        <dbReference type="ChEBI" id="CHEBI:15378"/>
        <dbReference type="ChEBI" id="CHEBI:30823"/>
        <dbReference type="ChEBI" id="CHEBI:53753"/>
        <dbReference type="ChEBI" id="CHEBI:75945"/>
    </reaction>
    <physiologicalReaction direction="left-to-right" evidence="2">
        <dbReference type="Rhea" id="RHEA:38576"/>
    </physiologicalReaction>
</comment>
<comment type="catalytic activity">
    <reaction evidence="2">
        <text>1,2,3-tributanoylglycerol + H2O = dibutanoylglycerol + butanoate + H(+)</text>
        <dbReference type="Rhea" id="RHEA:40475"/>
        <dbReference type="ChEBI" id="CHEBI:15377"/>
        <dbReference type="ChEBI" id="CHEBI:15378"/>
        <dbReference type="ChEBI" id="CHEBI:17968"/>
        <dbReference type="ChEBI" id="CHEBI:35020"/>
        <dbReference type="ChEBI" id="CHEBI:76478"/>
    </reaction>
    <physiologicalReaction direction="left-to-right" evidence="2">
        <dbReference type="Rhea" id="RHEA:40476"/>
    </physiologicalReaction>
</comment>
<comment type="catalytic activity">
    <reaction evidence="2">
        <text>1,2-dihexadecanoyl-sn-glycero-3-phosphocholine + H2O = hexadecanoyl-sn-glycero-3-phosphocholine + hexadecanoate + H(+)</text>
        <dbReference type="Rhea" id="RHEA:41384"/>
        <dbReference type="ChEBI" id="CHEBI:7896"/>
        <dbReference type="ChEBI" id="CHEBI:15377"/>
        <dbReference type="ChEBI" id="CHEBI:15378"/>
        <dbReference type="ChEBI" id="CHEBI:64563"/>
        <dbReference type="ChEBI" id="CHEBI:72999"/>
    </reaction>
    <physiologicalReaction direction="left-to-right" evidence="2">
        <dbReference type="Rhea" id="RHEA:41385"/>
    </physiologicalReaction>
</comment>
<comment type="subunit">
    <text evidence="2">Head to tail homodimer.</text>
</comment>
<comment type="subcellular location">
    <subcellularLocation>
        <location evidence="2">Secreted</location>
    </subcellularLocation>
</comment>
<comment type="tissue specificity">
    <text evidence="6">Expressed in placenta, lung, liver, testis and spleen.</text>
</comment>
<comment type="similarity">
    <text evidence="7">Belongs to the AB hydrolase superfamily. Lipase family.</text>
</comment>
<organism>
    <name type="scientific">Mus musculus</name>
    <name type="common">Mouse</name>
    <dbReference type="NCBI Taxonomy" id="10090"/>
    <lineage>
        <taxon>Eukaryota</taxon>
        <taxon>Metazoa</taxon>
        <taxon>Chordata</taxon>
        <taxon>Craniata</taxon>
        <taxon>Vertebrata</taxon>
        <taxon>Euteleostomi</taxon>
        <taxon>Mammalia</taxon>
        <taxon>Eutheria</taxon>
        <taxon>Euarchontoglires</taxon>
        <taxon>Glires</taxon>
        <taxon>Rodentia</taxon>
        <taxon>Myomorpha</taxon>
        <taxon>Muroidea</taxon>
        <taxon>Muridae</taxon>
        <taxon>Murinae</taxon>
        <taxon>Mus</taxon>
        <taxon>Mus</taxon>
    </lineage>
</organism>
<dbReference type="EC" id="3.1.1.3" evidence="2"/>
<dbReference type="EC" id="3.1.1.32" evidence="2"/>
<dbReference type="EMBL" id="AF118768">
    <property type="protein sequence ID" value="AAD30435.1"/>
    <property type="molecule type" value="mRNA"/>
</dbReference>
<dbReference type="EMBL" id="AC125122">
    <property type="status" value="NOT_ANNOTATED_CDS"/>
    <property type="molecule type" value="Genomic_DNA"/>
</dbReference>
<dbReference type="EMBL" id="BC020991">
    <property type="protein sequence ID" value="AAH20991.1"/>
    <property type="molecule type" value="mRNA"/>
</dbReference>
<dbReference type="CCDS" id="CCDS29343.1"/>
<dbReference type="RefSeq" id="NP_034850.3">
    <property type="nucleotide sequence ID" value="NM_010720.3"/>
</dbReference>
<dbReference type="SMR" id="Q9WVG5"/>
<dbReference type="BioGRID" id="201170">
    <property type="interactions" value="1"/>
</dbReference>
<dbReference type="FunCoup" id="Q9WVG5">
    <property type="interactions" value="257"/>
</dbReference>
<dbReference type="STRING" id="10090.ENSMUSP00000066536"/>
<dbReference type="BindingDB" id="Q9WVG5"/>
<dbReference type="ChEMBL" id="CHEMBL2380190"/>
<dbReference type="ESTHER" id="mouse-Lipg">
    <property type="family name" value="Lipoprotein_Lipase"/>
</dbReference>
<dbReference type="GlyCosmos" id="Q9WVG5">
    <property type="glycosylation" value="6 sites, No reported glycans"/>
</dbReference>
<dbReference type="GlyGen" id="Q9WVG5">
    <property type="glycosylation" value="6 sites"/>
</dbReference>
<dbReference type="iPTMnet" id="Q9WVG5"/>
<dbReference type="PhosphoSitePlus" id="Q9WVG5"/>
<dbReference type="PaxDb" id="10090-ENSMUSP00000066536"/>
<dbReference type="ProteomicsDB" id="292332"/>
<dbReference type="Antibodypedia" id="1561">
    <property type="antibodies" value="1103 antibodies from 32 providers"/>
</dbReference>
<dbReference type="Ensembl" id="ENSMUST00000066532.5">
    <property type="protein sequence ID" value="ENSMUSP00000066536.5"/>
    <property type="gene ID" value="ENSMUSG00000053846.6"/>
</dbReference>
<dbReference type="GeneID" id="16891"/>
<dbReference type="KEGG" id="mmu:16891"/>
<dbReference type="UCSC" id="uc008fpu.2">
    <property type="organism name" value="mouse"/>
</dbReference>
<dbReference type="AGR" id="MGI:1341803"/>
<dbReference type="CTD" id="9388"/>
<dbReference type="MGI" id="MGI:1341803">
    <property type="gene designation" value="Lipg"/>
</dbReference>
<dbReference type="VEuPathDB" id="HostDB:ENSMUSG00000053846"/>
<dbReference type="eggNOG" id="ENOG502QU8P">
    <property type="taxonomic scope" value="Eukaryota"/>
</dbReference>
<dbReference type="GeneTree" id="ENSGT00940000159394"/>
<dbReference type="HOGENOM" id="CLU_027171_1_2_1"/>
<dbReference type="InParanoid" id="Q9WVG5"/>
<dbReference type="OMA" id="QMPVGHV"/>
<dbReference type="OrthoDB" id="199913at2759"/>
<dbReference type="PhylomeDB" id="Q9WVG5"/>
<dbReference type="TreeFam" id="TF324997"/>
<dbReference type="Reactome" id="R-MMU-8964058">
    <property type="pathway name" value="HDL remodeling"/>
</dbReference>
<dbReference type="BioGRID-ORCS" id="16891">
    <property type="hits" value="2 hits in 77 CRISPR screens"/>
</dbReference>
<dbReference type="PRO" id="PR:Q9WVG5"/>
<dbReference type="Proteomes" id="UP000000589">
    <property type="component" value="Chromosome 18"/>
</dbReference>
<dbReference type="RNAct" id="Q9WVG5">
    <property type="molecule type" value="protein"/>
</dbReference>
<dbReference type="Bgee" id="ENSMUSG00000053846">
    <property type="expression patterns" value="Expressed in placenta labyrinth and 150 other cell types or tissues"/>
</dbReference>
<dbReference type="ExpressionAtlas" id="Q9WVG5">
    <property type="expression patterns" value="baseline and differential"/>
</dbReference>
<dbReference type="GO" id="GO:0009986">
    <property type="term" value="C:cell surface"/>
    <property type="evidence" value="ECO:0000266"/>
    <property type="project" value="MGI"/>
</dbReference>
<dbReference type="GO" id="GO:0005769">
    <property type="term" value="C:early endosome"/>
    <property type="evidence" value="ECO:0000266"/>
    <property type="project" value="MGI"/>
</dbReference>
<dbReference type="GO" id="GO:0005615">
    <property type="term" value="C:extracellular space"/>
    <property type="evidence" value="ECO:0007669"/>
    <property type="project" value="Ensembl"/>
</dbReference>
<dbReference type="GO" id="GO:0005794">
    <property type="term" value="C:Golgi apparatus"/>
    <property type="evidence" value="ECO:0000266"/>
    <property type="project" value="MGI"/>
</dbReference>
<dbReference type="GO" id="GO:0008201">
    <property type="term" value="F:heparin binding"/>
    <property type="evidence" value="ECO:0007669"/>
    <property type="project" value="UniProtKB-KW"/>
</dbReference>
<dbReference type="GO" id="GO:0004465">
    <property type="term" value="F:lipoprotein lipase activity"/>
    <property type="evidence" value="ECO:0007669"/>
    <property type="project" value="InterPro"/>
</dbReference>
<dbReference type="GO" id="GO:0008970">
    <property type="term" value="F:phospholipase A1 activity"/>
    <property type="evidence" value="ECO:0000250"/>
    <property type="project" value="UniProtKB"/>
</dbReference>
<dbReference type="GO" id="GO:0004620">
    <property type="term" value="F:phospholipase activity"/>
    <property type="evidence" value="ECO:0000314"/>
    <property type="project" value="MGI"/>
</dbReference>
<dbReference type="GO" id="GO:0004806">
    <property type="term" value="F:triacylglycerol lipase activity"/>
    <property type="evidence" value="ECO:0000250"/>
    <property type="project" value="UniProtKB"/>
</dbReference>
<dbReference type="GO" id="GO:0042632">
    <property type="term" value="P:cholesterol homeostasis"/>
    <property type="evidence" value="ECO:0007669"/>
    <property type="project" value="Ensembl"/>
</dbReference>
<dbReference type="GO" id="GO:0034375">
    <property type="term" value="P:high-density lipoprotein particle remodeling"/>
    <property type="evidence" value="ECO:0007669"/>
    <property type="project" value="Ensembl"/>
</dbReference>
<dbReference type="GO" id="GO:0016042">
    <property type="term" value="P:lipid catabolic process"/>
    <property type="evidence" value="ECO:0007669"/>
    <property type="project" value="UniProtKB-KW"/>
</dbReference>
<dbReference type="GO" id="GO:0055091">
    <property type="term" value="P:phospholipid homeostasis"/>
    <property type="evidence" value="ECO:0007669"/>
    <property type="project" value="Ensembl"/>
</dbReference>
<dbReference type="GO" id="GO:0032376">
    <property type="term" value="P:positive regulation of cholesterol transport"/>
    <property type="evidence" value="ECO:0007669"/>
    <property type="project" value="Ensembl"/>
</dbReference>
<dbReference type="GO" id="GO:0010983">
    <property type="term" value="P:positive regulation of high-density lipoprotein particle clearance"/>
    <property type="evidence" value="ECO:0007669"/>
    <property type="project" value="Ensembl"/>
</dbReference>
<dbReference type="GO" id="GO:0050746">
    <property type="term" value="P:regulation of lipoprotein metabolic process"/>
    <property type="evidence" value="ECO:0000315"/>
    <property type="project" value="MGI"/>
</dbReference>
<dbReference type="GO" id="GO:0007584">
    <property type="term" value="P:response to nutrient"/>
    <property type="evidence" value="ECO:0007669"/>
    <property type="project" value="Ensembl"/>
</dbReference>
<dbReference type="GO" id="GO:0043691">
    <property type="term" value="P:reverse cholesterol transport"/>
    <property type="evidence" value="ECO:0007669"/>
    <property type="project" value="Ensembl"/>
</dbReference>
<dbReference type="CDD" id="cd00707">
    <property type="entry name" value="Pancreat_lipase_like"/>
    <property type="match status" value="1"/>
</dbReference>
<dbReference type="CDD" id="cd01758">
    <property type="entry name" value="PLAT_LPL"/>
    <property type="match status" value="1"/>
</dbReference>
<dbReference type="FunFam" id="2.60.60.20:FF:000014">
    <property type="entry name" value="Endothelial lipase"/>
    <property type="match status" value="1"/>
</dbReference>
<dbReference type="FunFam" id="3.40.50.1820:FF:000109">
    <property type="entry name" value="Lipase, endothelial"/>
    <property type="match status" value="1"/>
</dbReference>
<dbReference type="Gene3D" id="3.40.50.1820">
    <property type="entry name" value="alpha/beta hydrolase"/>
    <property type="match status" value="1"/>
</dbReference>
<dbReference type="Gene3D" id="2.60.60.20">
    <property type="entry name" value="PLAT/LH2 domain"/>
    <property type="match status" value="1"/>
</dbReference>
<dbReference type="InterPro" id="IPR029058">
    <property type="entry name" value="AB_hydrolase_fold"/>
</dbReference>
<dbReference type="InterPro" id="IPR013818">
    <property type="entry name" value="Lipase"/>
</dbReference>
<dbReference type="InterPro" id="IPR016272">
    <property type="entry name" value="Lipase_LIPH"/>
</dbReference>
<dbReference type="InterPro" id="IPR033906">
    <property type="entry name" value="Lipase_N"/>
</dbReference>
<dbReference type="InterPro" id="IPR002330">
    <property type="entry name" value="Lipo_Lipase"/>
</dbReference>
<dbReference type="InterPro" id="IPR001024">
    <property type="entry name" value="PLAT/LH2_dom"/>
</dbReference>
<dbReference type="InterPro" id="IPR036392">
    <property type="entry name" value="PLAT/LH2_dom_sf"/>
</dbReference>
<dbReference type="InterPro" id="IPR000734">
    <property type="entry name" value="TAG_lipase"/>
</dbReference>
<dbReference type="PANTHER" id="PTHR11610:SF13">
    <property type="entry name" value="ENDOTHELIAL LIPASE"/>
    <property type="match status" value="1"/>
</dbReference>
<dbReference type="PANTHER" id="PTHR11610">
    <property type="entry name" value="LIPASE"/>
    <property type="match status" value="1"/>
</dbReference>
<dbReference type="Pfam" id="PF00151">
    <property type="entry name" value="Lipase"/>
    <property type="match status" value="1"/>
</dbReference>
<dbReference type="Pfam" id="PF01477">
    <property type="entry name" value="PLAT"/>
    <property type="match status" value="1"/>
</dbReference>
<dbReference type="PIRSF" id="PIRSF000865">
    <property type="entry name" value="Lipoprotein_lipase_LIPH"/>
    <property type="match status" value="1"/>
</dbReference>
<dbReference type="PRINTS" id="PR00822">
    <property type="entry name" value="LIPOLIPASE"/>
</dbReference>
<dbReference type="PRINTS" id="PR00821">
    <property type="entry name" value="TAGLIPASE"/>
</dbReference>
<dbReference type="SMART" id="SM00308">
    <property type="entry name" value="LH2"/>
    <property type="match status" value="1"/>
</dbReference>
<dbReference type="SUPFAM" id="SSF53474">
    <property type="entry name" value="alpha/beta-Hydrolases"/>
    <property type="match status" value="1"/>
</dbReference>
<dbReference type="SUPFAM" id="SSF49723">
    <property type="entry name" value="Lipase/lipooxygenase domain (PLAT/LH2 domain)"/>
    <property type="match status" value="1"/>
</dbReference>
<dbReference type="PROSITE" id="PS00120">
    <property type="entry name" value="LIPASE_SER"/>
    <property type="match status" value="1"/>
</dbReference>
<dbReference type="PROSITE" id="PS50095">
    <property type="entry name" value="PLAT"/>
    <property type="match status" value="1"/>
</dbReference>